<dbReference type="EC" id="3.6.5.-" evidence="1"/>
<dbReference type="EMBL" id="CP001110">
    <property type="protein sequence ID" value="ACF42588.1"/>
    <property type="molecule type" value="Genomic_DNA"/>
</dbReference>
<dbReference type="RefSeq" id="WP_012507084.1">
    <property type="nucleotide sequence ID" value="NC_011060.1"/>
</dbReference>
<dbReference type="SMR" id="B4SBR3"/>
<dbReference type="STRING" id="324925.Ppha_0252"/>
<dbReference type="KEGG" id="pph:Ppha_0252"/>
<dbReference type="eggNOG" id="COG0536">
    <property type="taxonomic scope" value="Bacteria"/>
</dbReference>
<dbReference type="HOGENOM" id="CLU_011747_2_0_10"/>
<dbReference type="OrthoDB" id="9807318at2"/>
<dbReference type="Proteomes" id="UP000002724">
    <property type="component" value="Chromosome"/>
</dbReference>
<dbReference type="GO" id="GO:0005737">
    <property type="term" value="C:cytoplasm"/>
    <property type="evidence" value="ECO:0007669"/>
    <property type="project" value="UniProtKB-SubCell"/>
</dbReference>
<dbReference type="GO" id="GO:0005525">
    <property type="term" value="F:GTP binding"/>
    <property type="evidence" value="ECO:0007669"/>
    <property type="project" value="UniProtKB-UniRule"/>
</dbReference>
<dbReference type="GO" id="GO:0003924">
    <property type="term" value="F:GTPase activity"/>
    <property type="evidence" value="ECO:0007669"/>
    <property type="project" value="UniProtKB-UniRule"/>
</dbReference>
<dbReference type="GO" id="GO:0000287">
    <property type="term" value="F:magnesium ion binding"/>
    <property type="evidence" value="ECO:0007669"/>
    <property type="project" value="InterPro"/>
</dbReference>
<dbReference type="GO" id="GO:0042254">
    <property type="term" value="P:ribosome biogenesis"/>
    <property type="evidence" value="ECO:0007669"/>
    <property type="project" value="UniProtKB-UniRule"/>
</dbReference>
<dbReference type="CDD" id="cd01898">
    <property type="entry name" value="Obg"/>
    <property type="match status" value="1"/>
</dbReference>
<dbReference type="FunFam" id="2.70.210.12:FF:000001">
    <property type="entry name" value="GTPase Obg"/>
    <property type="match status" value="1"/>
</dbReference>
<dbReference type="Gene3D" id="2.70.210.12">
    <property type="entry name" value="GTP1/OBG domain"/>
    <property type="match status" value="1"/>
</dbReference>
<dbReference type="Gene3D" id="3.40.50.300">
    <property type="entry name" value="P-loop containing nucleotide triphosphate hydrolases"/>
    <property type="match status" value="1"/>
</dbReference>
<dbReference type="HAMAP" id="MF_01454">
    <property type="entry name" value="GTPase_Obg"/>
    <property type="match status" value="1"/>
</dbReference>
<dbReference type="InterPro" id="IPR031167">
    <property type="entry name" value="G_OBG"/>
</dbReference>
<dbReference type="InterPro" id="IPR006073">
    <property type="entry name" value="GTP-bd"/>
</dbReference>
<dbReference type="InterPro" id="IPR014100">
    <property type="entry name" value="GTP-bd_Obg/CgtA"/>
</dbReference>
<dbReference type="InterPro" id="IPR006074">
    <property type="entry name" value="GTP1-OBG_CS"/>
</dbReference>
<dbReference type="InterPro" id="IPR006169">
    <property type="entry name" value="GTP1_OBG_dom"/>
</dbReference>
<dbReference type="InterPro" id="IPR036726">
    <property type="entry name" value="GTP1_OBG_dom_sf"/>
</dbReference>
<dbReference type="InterPro" id="IPR045086">
    <property type="entry name" value="OBG_GTPase"/>
</dbReference>
<dbReference type="InterPro" id="IPR027417">
    <property type="entry name" value="P-loop_NTPase"/>
</dbReference>
<dbReference type="NCBIfam" id="TIGR02729">
    <property type="entry name" value="Obg_CgtA"/>
    <property type="match status" value="1"/>
</dbReference>
<dbReference type="NCBIfam" id="NF008955">
    <property type="entry name" value="PRK12297.1"/>
    <property type="match status" value="1"/>
</dbReference>
<dbReference type="NCBIfam" id="NF008956">
    <property type="entry name" value="PRK12299.1"/>
    <property type="match status" value="1"/>
</dbReference>
<dbReference type="PANTHER" id="PTHR11702">
    <property type="entry name" value="DEVELOPMENTALLY REGULATED GTP-BINDING PROTEIN-RELATED"/>
    <property type="match status" value="1"/>
</dbReference>
<dbReference type="PANTHER" id="PTHR11702:SF31">
    <property type="entry name" value="MITOCHONDRIAL RIBOSOME-ASSOCIATED GTPASE 2"/>
    <property type="match status" value="1"/>
</dbReference>
<dbReference type="Pfam" id="PF01018">
    <property type="entry name" value="GTP1_OBG"/>
    <property type="match status" value="1"/>
</dbReference>
<dbReference type="Pfam" id="PF01926">
    <property type="entry name" value="MMR_HSR1"/>
    <property type="match status" value="1"/>
</dbReference>
<dbReference type="PIRSF" id="PIRSF002401">
    <property type="entry name" value="GTP_bd_Obg/CgtA"/>
    <property type="match status" value="1"/>
</dbReference>
<dbReference type="PRINTS" id="PR00326">
    <property type="entry name" value="GTP1OBG"/>
</dbReference>
<dbReference type="SUPFAM" id="SSF82051">
    <property type="entry name" value="Obg GTP-binding protein N-terminal domain"/>
    <property type="match status" value="1"/>
</dbReference>
<dbReference type="SUPFAM" id="SSF52540">
    <property type="entry name" value="P-loop containing nucleoside triphosphate hydrolases"/>
    <property type="match status" value="1"/>
</dbReference>
<dbReference type="PROSITE" id="PS51710">
    <property type="entry name" value="G_OBG"/>
    <property type="match status" value="1"/>
</dbReference>
<dbReference type="PROSITE" id="PS00905">
    <property type="entry name" value="GTP1_OBG"/>
    <property type="match status" value="1"/>
</dbReference>
<dbReference type="PROSITE" id="PS51883">
    <property type="entry name" value="OBG"/>
    <property type="match status" value="1"/>
</dbReference>
<gene>
    <name evidence="1" type="primary">obg</name>
    <name type="ordered locus">Ppha_0252</name>
</gene>
<evidence type="ECO:0000255" key="1">
    <source>
        <dbReference type="HAMAP-Rule" id="MF_01454"/>
    </source>
</evidence>
<evidence type="ECO:0000255" key="2">
    <source>
        <dbReference type="PROSITE-ProRule" id="PRU01231"/>
    </source>
</evidence>
<comment type="function">
    <text evidence="1">An essential GTPase which binds GTP, GDP and possibly (p)ppGpp with moderate affinity, with high nucleotide exchange rates and a fairly low GTP hydrolysis rate. Plays a role in control of the cell cycle, stress response, ribosome biogenesis and in those bacteria that undergo differentiation, in morphogenesis control.</text>
</comment>
<comment type="cofactor">
    <cofactor evidence="1">
        <name>Mg(2+)</name>
        <dbReference type="ChEBI" id="CHEBI:18420"/>
    </cofactor>
</comment>
<comment type="subunit">
    <text evidence="1">Monomer.</text>
</comment>
<comment type="subcellular location">
    <subcellularLocation>
        <location evidence="1">Cytoplasm</location>
    </subcellularLocation>
</comment>
<comment type="similarity">
    <text evidence="1">Belongs to the TRAFAC class OBG-HflX-like GTPase superfamily. OBG GTPase family.</text>
</comment>
<feature type="chain" id="PRO_0000386116" description="GTPase Obg">
    <location>
        <begin position="1"/>
        <end position="337"/>
    </location>
</feature>
<feature type="domain" description="Obg" evidence="2">
    <location>
        <begin position="1"/>
        <end position="159"/>
    </location>
</feature>
<feature type="domain" description="OBG-type G" evidence="1">
    <location>
        <begin position="160"/>
        <end position="323"/>
    </location>
</feature>
<feature type="binding site" evidence="1">
    <location>
        <begin position="166"/>
        <end position="173"/>
    </location>
    <ligand>
        <name>GTP</name>
        <dbReference type="ChEBI" id="CHEBI:37565"/>
    </ligand>
</feature>
<feature type="binding site" evidence="1">
    <location>
        <position position="173"/>
    </location>
    <ligand>
        <name>Mg(2+)</name>
        <dbReference type="ChEBI" id="CHEBI:18420"/>
    </ligand>
</feature>
<feature type="binding site" evidence="1">
    <location>
        <begin position="191"/>
        <end position="195"/>
    </location>
    <ligand>
        <name>GTP</name>
        <dbReference type="ChEBI" id="CHEBI:37565"/>
    </ligand>
</feature>
<feature type="binding site" evidence="1">
    <location>
        <position position="193"/>
    </location>
    <ligand>
        <name>Mg(2+)</name>
        <dbReference type="ChEBI" id="CHEBI:18420"/>
    </ligand>
</feature>
<feature type="binding site" evidence="1">
    <location>
        <begin position="213"/>
        <end position="216"/>
    </location>
    <ligand>
        <name>GTP</name>
        <dbReference type="ChEBI" id="CHEBI:37565"/>
    </ligand>
</feature>
<feature type="binding site" evidence="1">
    <location>
        <begin position="280"/>
        <end position="283"/>
    </location>
    <ligand>
        <name>GTP</name>
        <dbReference type="ChEBI" id="CHEBI:37565"/>
    </ligand>
</feature>
<feature type="binding site" evidence="1">
    <location>
        <begin position="304"/>
        <end position="306"/>
    </location>
    <ligand>
        <name>GTP</name>
        <dbReference type="ChEBI" id="CHEBI:37565"/>
    </ligand>
</feature>
<organism>
    <name type="scientific">Pelodictyon phaeoclathratiforme (strain DSM 5477 / BU-1)</name>
    <dbReference type="NCBI Taxonomy" id="324925"/>
    <lineage>
        <taxon>Bacteria</taxon>
        <taxon>Pseudomonadati</taxon>
        <taxon>Chlorobiota</taxon>
        <taxon>Chlorobiia</taxon>
        <taxon>Chlorobiales</taxon>
        <taxon>Chlorobiaceae</taxon>
        <taxon>Chlorobium/Pelodictyon group</taxon>
        <taxon>Pelodictyon</taxon>
    </lineage>
</organism>
<accession>B4SBR3</accession>
<name>OBG_PELPB</name>
<keyword id="KW-0963">Cytoplasm</keyword>
<keyword id="KW-0342">GTP-binding</keyword>
<keyword id="KW-0378">Hydrolase</keyword>
<keyword id="KW-0460">Magnesium</keyword>
<keyword id="KW-0479">Metal-binding</keyword>
<keyword id="KW-0547">Nucleotide-binding</keyword>
<keyword id="KW-1185">Reference proteome</keyword>
<reference key="1">
    <citation type="submission" date="2008-06" db="EMBL/GenBank/DDBJ databases">
        <title>Complete sequence of Pelodictyon phaeoclathratiforme BU-1.</title>
        <authorList>
            <consortium name="US DOE Joint Genome Institute"/>
            <person name="Lucas S."/>
            <person name="Copeland A."/>
            <person name="Lapidus A."/>
            <person name="Glavina del Rio T."/>
            <person name="Dalin E."/>
            <person name="Tice H."/>
            <person name="Bruce D."/>
            <person name="Goodwin L."/>
            <person name="Pitluck S."/>
            <person name="Schmutz J."/>
            <person name="Larimer F."/>
            <person name="Land M."/>
            <person name="Hauser L."/>
            <person name="Kyrpides N."/>
            <person name="Mikhailova N."/>
            <person name="Liu Z."/>
            <person name="Li T."/>
            <person name="Zhao F."/>
            <person name="Overmann J."/>
            <person name="Bryant D.A."/>
            <person name="Richardson P."/>
        </authorList>
    </citation>
    <scope>NUCLEOTIDE SEQUENCE [LARGE SCALE GENOMIC DNA]</scope>
    <source>
        <strain>DSM 5477 / BU-1</strain>
    </source>
</reference>
<sequence>MKFVDSASIFVHAGDGGKGCVSFRREKFVPKGGPDGGDGGRGGHVWLRTNRQLTTLLDFKYKKKYIAVRGVHGQGARKTGRDGADVVIDVPCGTIVRNGETNEIIADLTGEDQEILIARGGKGGRGNQHFATPTRQAPRYAEPGQKGELLMLNMELKLMADVGLVGFPNAGKSTLISVISAAKPKIADYPFTTLVPNLGIVRYEEYKSFVMADIPGIIEGAAEGKGLGLQFLRHIERTKILAILIAADSPDIADEYHTLLGELEKFEKELLDKPRLVVVTKMDIAAEDLEIPTLEEGVRVLSISAVSGQGLKELKDELWREVSGRIRAAEPLDESLG</sequence>
<protein>
    <recommendedName>
        <fullName evidence="1">GTPase Obg</fullName>
        <ecNumber evidence="1">3.6.5.-</ecNumber>
    </recommendedName>
    <alternativeName>
        <fullName evidence="1">GTP-binding protein Obg</fullName>
    </alternativeName>
</protein>
<proteinExistence type="inferred from homology"/>